<protein>
    <recommendedName>
        <fullName evidence="1">L-lactate dehydrogenase</fullName>
        <shortName evidence="1">L-LDH</shortName>
        <ecNumber evidence="1">1.1.1.27</ecNumber>
    </recommendedName>
</protein>
<dbReference type="EC" id="1.1.1.27" evidence="1"/>
<dbReference type="EMBL" id="AE017333">
    <property type="protein sequence ID" value="AAU39324.1"/>
    <property type="molecule type" value="Genomic_DNA"/>
</dbReference>
<dbReference type="EMBL" id="CP000002">
    <property type="protein sequence ID" value="AAU21970.1"/>
    <property type="molecule type" value="Genomic_DNA"/>
</dbReference>
<dbReference type="RefSeq" id="WP_003178742.1">
    <property type="nucleotide sequence ID" value="NC_006322.1"/>
</dbReference>
<dbReference type="SMR" id="Q65NP0"/>
<dbReference type="STRING" id="279010.BL01703"/>
<dbReference type="KEGG" id="bld:BLi00366"/>
<dbReference type="KEGG" id="bli:BL01703"/>
<dbReference type="eggNOG" id="COG0039">
    <property type="taxonomic scope" value="Bacteria"/>
</dbReference>
<dbReference type="HOGENOM" id="CLU_045401_1_1_9"/>
<dbReference type="UniPathway" id="UPA00554">
    <property type="reaction ID" value="UER00611"/>
</dbReference>
<dbReference type="Proteomes" id="UP000000606">
    <property type="component" value="Chromosome"/>
</dbReference>
<dbReference type="GO" id="GO:0005737">
    <property type="term" value="C:cytoplasm"/>
    <property type="evidence" value="ECO:0007669"/>
    <property type="project" value="UniProtKB-SubCell"/>
</dbReference>
<dbReference type="GO" id="GO:0004459">
    <property type="term" value="F:L-lactate dehydrogenase activity"/>
    <property type="evidence" value="ECO:0007669"/>
    <property type="project" value="UniProtKB-UniRule"/>
</dbReference>
<dbReference type="GO" id="GO:0006096">
    <property type="term" value="P:glycolytic process"/>
    <property type="evidence" value="ECO:0007669"/>
    <property type="project" value="UniProtKB-UniRule"/>
</dbReference>
<dbReference type="GO" id="GO:0006089">
    <property type="term" value="P:lactate metabolic process"/>
    <property type="evidence" value="ECO:0007669"/>
    <property type="project" value="TreeGrafter"/>
</dbReference>
<dbReference type="CDD" id="cd05291">
    <property type="entry name" value="HicDH_like"/>
    <property type="match status" value="1"/>
</dbReference>
<dbReference type="FunFam" id="3.40.50.720:FF:000018">
    <property type="entry name" value="Malate dehydrogenase"/>
    <property type="match status" value="1"/>
</dbReference>
<dbReference type="Gene3D" id="3.90.110.10">
    <property type="entry name" value="Lactate dehydrogenase/glycoside hydrolase, family 4, C-terminal"/>
    <property type="match status" value="1"/>
</dbReference>
<dbReference type="Gene3D" id="3.40.50.720">
    <property type="entry name" value="NAD(P)-binding Rossmann-like Domain"/>
    <property type="match status" value="1"/>
</dbReference>
<dbReference type="HAMAP" id="MF_00488">
    <property type="entry name" value="Lactate_dehydrog"/>
    <property type="match status" value="1"/>
</dbReference>
<dbReference type="InterPro" id="IPR001557">
    <property type="entry name" value="L-lactate/malate_DH"/>
</dbReference>
<dbReference type="InterPro" id="IPR011304">
    <property type="entry name" value="L-lactate_DH"/>
</dbReference>
<dbReference type="InterPro" id="IPR018177">
    <property type="entry name" value="L-lactate_DH_AS"/>
</dbReference>
<dbReference type="InterPro" id="IPR022383">
    <property type="entry name" value="Lactate/malate_DH_C"/>
</dbReference>
<dbReference type="InterPro" id="IPR001236">
    <property type="entry name" value="Lactate/malate_DH_N"/>
</dbReference>
<dbReference type="InterPro" id="IPR015955">
    <property type="entry name" value="Lactate_DH/Glyco_Ohase_4_C"/>
</dbReference>
<dbReference type="InterPro" id="IPR036291">
    <property type="entry name" value="NAD(P)-bd_dom_sf"/>
</dbReference>
<dbReference type="NCBIfam" id="TIGR01771">
    <property type="entry name" value="L-LDH-NAD"/>
    <property type="match status" value="1"/>
</dbReference>
<dbReference type="NCBIfam" id="NF000824">
    <property type="entry name" value="PRK00066.1"/>
    <property type="match status" value="1"/>
</dbReference>
<dbReference type="NCBIfam" id="NF004863">
    <property type="entry name" value="PRK06223.1"/>
    <property type="match status" value="1"/>
</dbReference>
<dbReference type="PANTHER" id="PTHR43128">
    <property type="entry name" value="L-2-HYDROXYCARBOXYLATE DEHYDROGENASE (NAD(P)(+))"/>
    <property type="match status" value="1"/>
</dbReference>
<dbReference type="PANTHER" id="PTHR43128:SF16">
    <property type="entry name" value="L-LACTATE DEHYDROGENASE"/>
    <property type="match status" value="1"/>
</dbReference>
<dbReference type="Pfam" id="PF02866">
    <property type="entry name" value="Ldh_1_C"/>
    <property type="match status" value="1"/>
</dbReference>
<dbReference type="Pfam" id="PF00056">
    <property type="entry name" value="Ldh_1_N"/>
    <property type="match status" value="1"/>
</dbReference>
<dbReference type="PIRSF" id="PIRSF000102">
    <property type="entry name" value="Lac_mal_DH"/>
    <property type="match status" value="1"/>
</dbReference>
<dbReference type="PRINTS" id="PR00086">
    <property type="entry name" value="LLDHDRGNASE"/>
</dbReference>
<dbReference type="SUPFAM" id="SSF56327">
    <property type="entry name" value="LDH C-terminal domain-like"/>
    <property type="match status" value="1"/>
</dbReference>
<dbReference type="SUPFAM" id="SSF51735">
    <property type="entry name" value="NAD(P)-binding Rossmann-fold domains"/>
    <property type="match status" value="1"/>
</dbReference>
<dbReference type="PROSITE" id="PS00064">
    <property type="entry name" value="L_LDH"/>
    <property type="match status" value="1"/>
</dbReference>
<proteinExistence type="inferred from homology"/>
<evidence type="ECO:0000255" key="1">
    <source>
        <dbReference type="HAMAP-Rule" id="MF_00488"/>
    </source>
</evidence>
<organism>
    <name type="scientific">Bacillus licheniformis (strain ATCC 14580 / DSM 13 / JCM 2505 / CCUG 7422 / NBRC 12200 / NCIMB 9375 / NCTC 10341 / NRRL NRS-1264 / Gibson 46)</name>
    <dbReference type="NCBI Taxonomy" id="279010"/>
    <lineage>
        <taxon>Bacteria</taxon>
        <taxon>Bacillati</taxon>
        <taxon>Bacillota</taxon>
        <taxon>Bacilli</taxon>
        <taxon>Bacillales</taxon>
        <taxon>Bacillaceae</taxon>
        <taxon>Bacillus</taxon>
    </lineage>
</organism>
<accession>Q65NP0</accession>
<accession>Q62Z38</accession>
<feature type="chain" id="PRO_0000237540" description="L-lactate dehydrogenase">
    <location>
        <begin position="1"/>
        <end position="319"/>
    </location>
</feature>
<feature type="active site" description="Proton acceptor" evidence="1">
    <location>
        <position position="179"/>
    </location>
</feature>
<feature type="binding site" evidence="1">
    <location>
        <position position="17"/>
    </location>
    <ligand>
        <name>NAD(+)</name>
        <dbReference type="ChEBI" id="CHEBI:57540"/>
    </ligand>
</feature>
<feature type="binding site" evidence="1">
    <location>
        <position position="38"/>
    </location>
    <ligand>
        <name>NAD(+)</name>
        <dbReference type="ChEBI" id="CHEBI:57540"/>
    </ligand>
</feature>
<feature type="binding site" evidence="1">
    <location>
        <position position="43"/>
    </location>
    <ligand>
        <name>NAD(+)</name>
        <dbReference type="ChEBI" id="CHEBI:57540"/>
    </ligand>
</feature>
<feature type="binding site" evidence="1">
    <location>
        <position position="69"/>
    </location>
    <ligand>
        <name>NAD(+)</name>
        <dbReference type="ChEBI" id="CHEBI:57540"/>
    </ligand>
</feature>
<feature type="binding site" evidence="1">
    <location>
        <begin position="83"/>
        <end position="84"/>
    </location>
    <ligand>
        <name>NAD(+)</name>
        <dbReference type="ChEBI" id="CHEBI:57540"/>
    </ligand>
</feature>
<feature type="binding site" evidence="1">
    <location>
        <position position="86"/>
    </location>
    <ligand>
        <name>substrate</name>
    </ligand>
</feature>
<feature type="binding site" evidence="1">
    <location>
        <position position="92"/>
    </location>
    <ligand>
        <name>substrate</name>
    </ligand>
</feature>
<feature type="binding site" evidence="1">
    <location>
        <begin position="122"/>
        <end position="124"/>
    </location>
    <ligand>
        <name>NAD(+)</name>
        <dbReference type="ChEBI" id="CHEBI:57540"/>
    </ligand>
</feature>
<feature type="binding site" evidence="1">
    <location>
        <begin position="124"/>
        <end position="127"/>
    </location>
    <ligand>
        <name>substrate</name>
    </ligand>
</feature>
<feature type="binding site" evidence="1">
    <location>
        <position position="147"/>
    </location>
    <ligand>
        <name>NAD(+)</name>
        <dbReference type="ChEBI" id="CHEBI:57540"/>
    </ligand>
</feature>
<feature type="binding site" evidence="1">
    <location>
        <begin position="152"/>
        <end position="155"/>
    </location>
    <ligand>
        <name>substrate</name>
    </ligand>
</feature>
<feature type="binding site" evidence="1">
    <location>
        <position position="157"/>
    </location>
    <ligand>
        <name>beta-D-fructose 1,6-bisphosphate</name>
        <dbReference type="ChEBI" id="CHEBI:32966"/>
        <note>allosteric activator</note>
    </ligand>
</feature>
<feature type="binding site" evidence="1">
    <location>
        <position position="172"/>
    </location>
    <ligand>
        <name>beta-D-fructose 1,6-bisphosphate</name>
        <dbReference type="ChEBI" id="CHEBI:32966"/>
        <note>allosteric activator</note>
    </ligand>
</feature>
<feature type="binding site" evidence="1">
    <location>
        <position position="233"/>
    </location>
    <ligand>
        <name>substrate</name>
    </ligand>
</feature>
<feature type="modified residue" description="Phosphotyrosine" evidence="1">
    <location>
        <position position="224"/>
    </location>
</feature>
<comment type="function">
    <text evidence="1">Catalyzes the conversion of lactate to pyruvate.</text>
</comment>
<comment type="catalytic activity">
    <reaction evidence="1">
        <text>(S)-lactate + NAD(+) = pyruvate + NADH + H(+)</text>
        <dbReference type="Rhea" id="RHEA:23444"/>
        <dbReference type="ChEBI" id="CHEBI:15361"/>
        <dbReference type="ChEBI" id="CHEBI:15378"/>
        <dbReference type="ChEBI" id="CHEBI:16651"/>
        <dbReference type="ChEBI" id="CHEBI:57540"/>
        <dbReference type="ChEBI" id="CHEBI:57945"/>
        <dbReference type="EC" id="1.1.1.27"/>
    </reaction>
</comment>
<comment type="activity regulation">
    <text evidence="1">Allosterically activated by fructose 1,6-bisphosphate (FBP).</text>
</comment>
<comment type="pathway">
    <text evidence="1">Fermentation; pyruvate fermentation to lactate; (S)-lactate from pyruvate: step 1/1.</text>
</comment>
<comment type="subunit">
    <text evidence="1">Homotetramer.</text>
</comment>
<comment type="subcellular location">
    <subcellularLocation>
        <location evidence="1">Cytoplasm</location>
    </subcellularLocation>
</comment>
<comment type="similarity">
    <text evidence="1">Belongs to the LDH/MDH superfamily. LDH family.</text>
</comment>
<sequence length="319" mass="35111">MRNQKVNRTVLIGAGFVGSSYAFTLINQGITDELVIIDLNKDKAMGDVMDLNHGKAFAPHPVKTWYGTYDDCKEADIVCVCAGANQKPGETRLDLVEKNLKIFKGIIGEVMASGFDGIFLVATNPVDILTYATWKFSGLPKERVIGSGTTLDTARFRYLLSEYFGVAAHNAHGYIIGEHGDTELPVWSHANIGGVPVSDLLKRNEKYKAEDLDELFDNVKNAAYHIIEKKGATYYGVAMSLARITKAIYRNEEAILTVSAHLDGEFGENDVYIGVPAVVGRCGAREIVELDLNEKEKQQFKHSAGVLKAILKPHFELQA</sequence>
<name>LDH_BACLD</name>
<reference key="1">
    <citation type="journal article" date="2004" name="J. Mol. Microbiol. Biotechnol.">
        <title>The complete genome sequence of Bacillus licheniformis DSM13, an organism with great industrial potential.</title>
        <authorList>
            <person name="Veith B."/>
            <person name="Herzberg C."/>
            <person name="Steckel S."/>
            <person name="Feesche J."/>
            <person name="Maurer K.H."/>
            <person name="Ehrenreich P."/>
            <person name="Baeumer S."/>
            <person name="Henne A."/>
            <person name="Liesegang H."/>
            <person name="Merkl R."/>
            <person name="Ehrenreich A."/>
            <person name="Gottschalk G."/>
        </authorList>
    </citation>
    <scope>NUCLEOTIDE SEQUENCE [LARGE SCALE GENOMIC DNA]</scope>
    <source>
        <strain>ATCC 14580 / DSM 13 / JCM 2505 / CCUG 7422 / NBRC 12200 / NCIMB 9375 / NCTC 10341 / NRRL NRS-1264 / Gibson 46</strain>
    </source>
</reference>
<reference key="2">
    <citation type="journal article" date="2004" name="Genome Biol.">
        <title>Complete genome sequence of the industrial bacterium Bacillus licheniformis and comparisons with closely related Bacillus species.</title>
        <authorList>
            <person name="Rey M.W."/>
            <person name="Ramaiya P."/>
            <person name="Nelson B.A."/>
            <person name="Brody-Karpin S.D."/>
            <person name="Zaretsky E.J."/>
            <person name="Tang M."/>
            <person name="Lopez de Leon A."/>
            <person name="Xiang H."/>
            <person name="Gusti V."/>
            <person name="Clausen I.G."/>
            <person name="Olsen P.B."/>
            <person name="Rasmussen M.D."/>
            <person name="Andersen J.T."/>
            <person name="Joergensen P.L."/>
            <person name="Larsen T.S."/>
            <person name="Sorokin A."/>
            <person name="Bolotin A."/>
            <person name="Lapidus A."/>
            <person name="Galleron N."/>
            <person name="Ehrlich S.D."/>
            <person name="Berka R.M."/>
        </authorList>
    </citation>
    <scope>NUCLEOTIDE SEQUENCE [LARGE SCALE GENOMIC DNA]</scope>
    <source>
        <strain>ATCC 14580 / DSM 13 / JCM 2505 / CCUG 7422 / NBRC 12200 / NCIMB 9375 / NCTC 10341 / NRRL NRS-1264 / Gibson 46</strain>
    </source>
</reference>
<keyword id="KW-0021">Allosteric enzyme</keyword>
<keyword id="KW-0963">Cytoplasm</keyword>
<keyword id="KW-0520">NAD</keyword>
<keyword id="KW-0560">Oxidoreductase</keyword>
<keyword id="KW-0597">Phosphoprotein</keyword>
<keyword id="KW-1185">Reference proteome</keyword>
<gene>
    <name evidence="1" type="primary">ldh</name>
    <name type="ordered locus">BLi00366</name>
    <name type="ordered locus">BL01703</name>
</gene>